<dbReference type="EC" id="3.2.1.4"/>
<dbReference type="EMBL" id="L29381">
    <property type="protein sequence ID" value="AAA65589.1"/>
    <property type="molecule type" value="mRNA"/>
</dbReference>
<dbReference type="SMR" id="P45699"/>
<dbReference type="CAZy" id="CBM1">
    <property type="family name" value="Carbohydrate-Binding Module Family 1"/>
</dbReference>
<dbReference type="CAZy" id="GH45">
    <property type="family name" value="Glycoside Hydrolase Family 45"/>
</dbReference>
<dbReference type="VEuPathDB" id="FungiDB:FOC1_g10009944"/>
<dbReference type="VEuPathDB" id="FungiDB:FOC4_g10009030"/>
<dbReference type="VEuPathDB" id="FungiDB:FOIG_08964"/>
<dbReference type="VEuPathDB" id="FungiDB:FOMG_07426"/>
<dbReference type="VEuPathDB" id="FungiDB:FOXG_10638"/>
<dbReference type="VEuPathDB" id="FungiDB:FOZG_10130"/>
<dbReference type="VEuPathDB" id="FungiDB:HZS61_008825"/>
<dbReference type="OrthoDB" id="10035502at2759"/>
<dbReference type="GO" id="GO:0005576">
    <property type="term" value="C:extracellular region"/>
    <property type="evidence" value="ECO:0007669"/>
    <property type="project" value="InterPro"/>
</dbReference>
<dbReference type="GO" id="GO:0008810">
    <property type="term" value="F:cellulase activity"/>
    <property type="evidence" value="ECO:0007669"/>
    <property type="project" value="UniProtKB-EC"/>
</dbReference>
<dbReference type="GO" id="GO:0030248">
    <property type="term" value="F:cellulose binding"/>
    <property type="evidence" value="ECO:0007669"/>
    <property type="project" value="InterPro"/>
</dbReference>
<dbReference type="GO" id="GO:0030245">
    <property type="term" value="P:cellulose catabolic process"/>
    <property type="evidence" value="ECO:0007669"/>
    <property type="project" value="UniProtKB-KW"/>
</dbReference>
<dbReference type="CDD" id="cd22278">
    <property type="entry name" value="DPBB_GH45_endoglucanase"/>
    <property type="match status" value="1"/>
</dbReference>
<dbReference type="Gene3D" id="2.40.40.10">
    <property type="entry name" value="RlpA-like domain"/>
    <property type="match status" value="1"/>
</dbReference>
<dbReference type="InterPro" id="IPR035971">
    <property type="entry name" value="CBD_sf"/>
</dbReference>
<dbReference type="InterPro" id="IPR000254">
    <property type="entry name" value="Cellulose-bd_dom_fun"/>
</dbReference>
<dbReference type="InterPro" id="IPR052288">
    <property type="entry name" value="GH45_Enzymes"/>
</dbReference>
<dbReference type="InterPro" id="IPR000334">
    <property type="entry name" value="Glyco_hydro_45"/>
</dbReference>
<dbReference type="InterPro" id="IPR036908">
    <property type="entry name" value="RlpA-like_sf"/>
</dbReference>
<dbReference type="PANTHER" id="PTHR39730">
    <property type="entry name" value="ENDOGLUCANASE 1"/>
    <property type="match status" value="1"/>
</dbReference>
<dbReference type="PANTHER" id="PTHR39730:SF1">
    <property type="entry name" value="ENDOGLUCANASE 1"/>
    <property type="match status" value="1"/>
</dbReference>
<dbReference type="Pfam" id="PF00734">
    <property type="entry name" value="CBM_1"/>
    <property type="match status" value="1"/>
</dbReference>
<dbReference type="Pfam" id="PF02015">
    <property type="entry name" value="Glyco_hydro_45"/>
    <property type="match status" value="1"/>
</dbReference>
<dbReference type="SMART" id="SM00236">
    <property type="entry name" value="fCBD"/>
    <property type="match status" value="1"/>
</dbReference>
<dbReference type="SUPFAM" id="SSF50685">
    <property type="entry name" value="Barwin-like endoglucanases"/>
    <property type="match status" value="1"/>
</dbReference>
<dbReference type="SUPFAM" id="SSF57180">
    <property type="entry name" value="Cellulose-binding domain"/>
    <property type="match status" value="1"/>
</dbReference>
<dbReference type="PROSITE" id="PS00562">
    <property type="entry name" value="CBM1_1"/>
    <property type="match status" value="1"/>
</dbReference>
<dbReference type="PROSITE" id="PS51164">
    <property type="entry name" value="CBM1_2"/>
    <property type="match status" value="1"/>
</dbReference>
<dbReference type="PROSITE" id="PS01140">
    <property type="entry name" value="GLYCOSYL_HYDROL_F45"/>
    <property type="match status" value="1"/>
</dbReference>
<proteinExistence type="evidence at transcript level"/>
<name>GUNK_FUSOX</name>
<organism>
    <name type="scientific">Fusarium oxysporum</name>
    <name type="common">Fusarium vascular wilt</name>
    <dbReference type="NCBI Taxonomy" id="5507"/>
    <lineage>
        <taxon>Eukaryota</taxon>
        <taxon>Fungi</taxon>
        <taxon>Dikarya</taxon>
        <taxon>Ascomycota</taxon>
        <taxon>Pezizomycotina</taxon>
        <taxon>Sordariomycetes</taxon>
        <taxon>Hypocreomycetidae</taxon>
        <taxon>Hypocreales</taxon>
        <taxon>Nectriaceae</taxon>
        <taxon>Fusarium</taxon>
        <taxon>Fusarium oxysporum species complex</taxon>
    </lineage>
</organism>
<evidence type="ECO:0000250" key="1"/>
<evidence type="ECO:0000255" key="2"/>
<evidence type="ECO:0000255" key="3">
    <source>
        <dbReference type="PROSITE-ProRule" id="PRU00597"/>
    </source>
</evidence>
<evidence type="ECO:0000255" key="4">
    <source>
        <dbReference type="PROSITE-ProRule" id="PRU10069"/>
    </source>
</evidence>
<evidence type="ECO:0000256" key="5">
    <source>
        <dbReference type="SAM" id="MobiDB-lite"/>
    </source>
</evidence>
<evidence type="ECO:0000305" key="6"/>
<reference key="1">
    <citation type="journal article" date="1994" name="Gene">
        <title>The use of conserved cellulase family-specific sequences to clone cellulase homologue cDNAs from Fusarium oxysporum.</title>
        <authorList>
            <person name="Sheppard P.O."/>
            <person name="Grant F.J."/>
            <person name="Oort P.J."/>
            <person name="Sprecher C.A."/>
            <person name="Foster D.C."/>
            <person name="Hagen F.S."/>
            <person name="Upshall A."/>
            <person name="McKnight G.L."/>
            <person name="O'Hara P.J."/>
        </authorList>
    </citation>
    <scope>NUCLEOTIDE SEQUENCE [MRNA]</scope>
</reference>
<accession>P45699</accession>
<feature type="signal peptide" evidence="2">
    <location>
        <begin position="1"/>
        <end position="18"/>
    </location>
</feature>
<feature type="chain" id="PRO_0000008024" description="Putative endoglucanase type K">
    <location>
        <begin position="19"/>
        <end position="376"/>
    </location>
</feature>
<feature type="domain" description="CBM1" evidence="3">
    <location>
        <begin position="335"/>
        <end position="374"/>
    </location>
</feature>
<feature type="region of interest" description="Catalytic">
    <location>
        <begin position="19"/>
        <end position="308"/>
    </location>
</feature>
<feature type="region of interest" description="Disordered" evidence="5">
    <location>
        <begin position="229"/>
        <end position="332"/>
    </location>
</feature>
<feature type="region of interest" description="Linker">
    <location>
        <begin position="309"/>
        <end position="338"/>
    </location>
</feature>
<feature type="compositionally biased region" description="Low complexity" evidence="5">
    <location>
        <begin position="235"/>
        <end position="258"/>
    </location>
</feature>
<feature type="compositionally biased region" description="Low complexity" evidence="5">
    <location>
        <begin position="291"/>
        <end position="306"/>
    </location>
</feature>
<feature type="active site" description="Nucleophile" evidence="4">
    <location>
        <position position="29"/>
    </location>
</feature>
<feature type="active site" description="Proton donor" evidence="1">
    <location>
        <position position="140"/>
    </location>
</feature>
<keyword id="KW-0119">Carbohydrate metabolism</keyword>
<keyword id="KW-0136">Cellulose degradation</keyword>
<keyword id="KW-0326">Glycosidase</keyword>
<keyword id="KW-0378">Hydrolase</keyword>
<keyword id="KW-0624">Polysaccharide degradation</keyword>
<keyword id="KW-0732">Signal</keyword>
<sequence>MRSYTLLALAGPLAVSAASGSGHSTRYWDCCKPSCSWSGKAAVNAPALTCDKNDNPISNTNAVNGCEGGGSAYACTNYSPWAVNDELAYGFAATKISGGSEASWCCACYALTFTTGPVKGKKMIVQSTNTGGDLGDNHFDLMMPGGGVGIFDGCTSEFGKALGGAQYGGISSRSECDSYPELLKDGCHWRFDWFENADNPDFTFEQVQCPKALLDISGCKRDDDSSFPAFKGDTSASKPQPSSSAKKTTSAAAAAQPQKTKDSAPVVQKSSTKPAAQPEPTKPADKPQTDKPVATKPAATKPAQPVNKPKTTQKVRGTKTRGSCPAKTDATAKASVVPAYYQCGGSKSAYPNGNLACATGSKCVKQNEYYSQCVPN</sequence>
<protein>
    <recommendedName>
        <fullName>Putative endoglucanase type K</fullName>
        <ecNumber>3.2.1.4</ecNumber>
    </recommendedName>
    <alternativeName>
        <fullName>Cellulase</fullName>
    </alternativeName>
    <alternativeName>
        <fullName>Endo-1,4-beta-glucanase</fullName>
    </alternativeName>
</protein>
<comment type="catalytic activity">
    <reaction>
        <text>Endohydrolysis of (1-&gt;4)-beta-D-glucosidic linkages in cellulose, lichenin and cereal beta-D-glucans.</text>
        <dbReference type="EC" id="3.2.1.4"/>
    </reaction>
</comment>
<comment type="similarity">
    <text evidence="6">Belongs to the glycosyl hydrolase 45 (cellulase K) family.</text>
</comment>